<proteinExistence type="inferred from homology"/>
<gene>
    <name evidence="1" type="primary">rplJ</name>
    <name type="ordered locus">Arth_2990</name>
</gene>
<name>RL10_ARTS2</name>
<evidence type="ECO:0000255" key="1">
    <source>
        <dbReference type="HAMAP-Rule" id="MF_00362"/>
    </source>
</evidence>
<evidence type="ECO:0000256" key="2">
    <source>
        <dbReference type="SAM" id="MobiDB-lite"/>
    </source>
</evidence>
<evidence type="ECO:0000305" key="3"/>
<protein>
    <recommendedName>
        <fullName evidence="1">Large ribosomal subunit protein uL10</fullName>
    </recommendedName>
    <alternativeName>
        <fullName evidence="3">50S ribosomal protein L10</fullName>
    </alternativeName>
</protein>
<comment type="function">
    <text evidence="1">Forms part of the ribosomal stalk, playing a central role in the interaction of the ribosome with GTP-bound translation factors.</text>
</comment>
<comment type="subunit">
    <text evidence="1">Part of the ribosomal stalk of the 50S ribosomal subunit. The N-terminus interacts with L11 and the large rRNA to form the base of the stalk. The C-terminus forms an elongated spine to which L12 dimers bind in a sequential fashion forming a multimeric L10(L12)X complex.</text>
</comment>
<comment type="similarity">
    <text evidence="1">Belongs to the universal ribosomal protein uL10 family.</text>
</comment>
<reference key="1">
    <citation type="journal article" date="2013" name="Stand. Genomic Sci.">
        <title>Complete genome sequence of Arthrobacter sp. strain FB24.</title>
        <authorList>
            <person name="Nakatsu C.H."/>
            <person name="Barabote R."/>
            <person name="Thompson S."/>
            <person name="Bruce D."/>
            <person name="Detter C."/>
            <person name="Brettin T."/>
            <person name="Han C."/>
            <person name="Beasley F."/>
            <person name="Chen W."/>
            <person name="Konopka A."/>
            <person name="Xie G."/>
        </authorList>
    </citation>
    <scope>NUCLEOTIDE SEQUENCE [LARGE SCALE GENOMIC DNA]</scope>
    <source>
        <strain>FB24</strain>
    </source>
</reference>
<organism>
    <name type="scientific">Arthrobacter sp. (strain FB24)</name>
    <dbReference type="NCBI Taxonomy" id="290399"/>
    <lineage>
        <taxon>Bacteria</taxon>
        <taxon>Bacillati</taxon>
        <taxon>Actinomycetota</taxon>
        <taxon>Actinomycetes</taxon>
        <taxon>Micrococcales</taxon>
        <taxon>Micrococcaceae</taxon>
        <taxon>Arthrobacter</taxon>
    </lineage>
</organism>
<feature type="chain" id="PRO_1000005466" description="Large ribosomal subunit protein uL10">
    <location>
        <begin position="1"/>
        <end position="196"/>
    </location>
</feature>
<feature type="region of interest" description="Disordered" evidence="2">
    <location>
        <begin position="163"/>
        <end position="196"/>
    </location>
</feature>
<feature type="compositionally biased region" description="Low complexity" evidence="2">
    <location>
        <begin position="164"/>
        <end position="196"/>
    </location>
</feature>
<dbReference type="EMBL" id="CP000454">
    <property type="protein sequence ID" value="ABK04369.1"/>
    <property type="molecule type" value="Genomic_DNA"/>
</dbReference>
<dbReference type="RefSeq" id="WP_011692822.1">
    <property type="nucleotide sequence ID" value="NC_008541.1"/>
</dbReference>
<dbReference type="SMR" id="A0JZ99"/>
<dbReference type="STRING" id="290399.Arth_2990"/>
<dbReference type="KEGG" id="art:Arth_2990"/>
<dbReference type="eggNOG" id="COG0244">
    <property type="taxonomic scope" value="Bacteria"/>
</dbReference>
<dbReference type="HOGENOM" id="CLU_092227_1_0_11"/>
<dbReference type="OrthoDB" id="3186107at2"/>
<dbReference type="Proteomes" id="UP000000754">
    <property type="component" value="Chromosome"/>
</dbReference>
<dbReference type="GO" id="GO:0015934">
    <property type="term" value="C:large ribosomal subunit"/>
    <property type="evidence" value="ECO:0007669"/>
    <property type="project" value="InterPro"/>
</dbReference>
<dbReference type="GO" id="GO:0070180">
    <property type="term" value="F:large ribosomal subunit rRNA binding"/>
    <property type="evidence" value="ECO:0007669"/>
    <property type="project" value="UniProtKB-UniRule"/>
</dbReference>
<dbReference type="GO" id="GO:0003735">
    <property type="term" value="F:structural constituent of ribosome"/>
    <property type="evidence" value="ECO:0007669"/>
    <property type="project" value="InterPro"/>
</dbReference>
<dbReference type="GO" id="GO:0006412">
    <property type="term" value="P:translation"/>
    <property type="evidence" value="ECO:0007669"/>
    <property type="project" value="UniProtKB-UniRule"/>
</dbReference>
<dbReference type="CDD" id="cd05797">
    <property type="entry name" value="Ribosomal_L10"/>
    <property type="match status" value="1"/>
</dbReference>
<dbReference type="Gene3D" id="3.30.70.1730">
    <property type="match status" value="1"/>
</dbReference>
<dbReference type="HAMAP" id="MF_00362">
    <property type="entry name" value="Ribosomal_uL10"/>
    <property type="match status" value="1"/>
</dbReference>
<dbReference type="InterPro" id="IPR001790">
    <property type="entry name" value="Ribosomal_uL10"/>
</dbReference>
<dbReference type="InterPro" id="IPR043141">
    <property type="entry name" value="Ribosomal_uL10-like_sf"/>
</dbReference>
<dbReference type="InterPro" id="IPR022973">
    <property type="entry name" value="Ribosomal_uL10_bac"/>
</dbReference>
<dbReference type="InterPro" id="IPR047865">
    <property type="entry name" value="Ribosomal_uL10_bac_type"/>
</dbReference>
<dbReference type="InterPro" id="IPR002363">
    <property type="entry name" value="Ribosomal_uL10_CS_bac"/>
</dbReference>
<dbReference type="NCBIfam" id="NF000955">
    <property type="entry name" value="PRK00099.1-1"/>
    <property type="match status" value="1"/>
</dbReference>
<dbReference type="PANTHER" id="PTHR11560">
    <property type="entry name" value="39S RIBOSOMAL PROTEIN L10, MITOCHONDRIAL"/>
    <property type="match status" value="1"/>
</dbReference>
<dbReference type="Pfam" id="PF00466">
    <property type="entry name" value="Ribosomal_L10"/>
    <property type="match status" value="1"/>
</dbReference>
<dbReference type="SUPFAM" id="SSF160369">
    <property type="entry name" value="Ribosomal protein L10-like"/>
    <property type="match status" value="1"/>
</dbReference>
<dbReference type="PROSITE" id="PS01109">
    <property type="entry name" value="RIBOSOMAL_L10"/>
    <property type="match status" value="1"/>
</dbReference>
<accession>A0JZ99</accession>
<sequence>MATPTKVSAVAEITNDFKESNAAVLTEYRGLTVAQLKQLRVSLGQDTKFAVVKNTLTAIAAKEAGVEAFDGQLAGPTAIAFIKGDAVAAAKSLTDFAKTNKQLVIKTGYFEGKALNASEVAALAALESRELQLAKVAGILKAPAAAAARIIDALRLKLEEENGAPAAAEAPAAEEAPAAEAAETEAPAEAAATEEN</sequence>
<keyword id="KW-1185">Reference proteome</keyword>
<keyword id="KW-0687">Ribonucleoprotein</keyword>
<keyword id="KW-0689">Ribosomal protein</keyword>
<keyword id="KW-0694">RNA-binding</keyword>
<keyword id="KW-0699">rRNA-binding</keyword>